<organism>
    <name type="scientific">Burkholderia vietnamiensis (strain G4 / LMG 22486)</name>
    <name type="common">Burkholderia cepacia (strain R1808)</name>
    <dbReference type="NCBI Taxonomy" id="269482"/>
    <lineage>
        <taxon>Bacteria</taxon>
        <taxon>Pseudomonadati</taxon>
        <taxon>Pseudomonadota</taxon>
        <taxon>Betaproteobacteria</taxon>
        <taxon>Burkholderiales</taxon>
        <taxon>Burkholderiaceae</taxon>
        <taxon>Burkholderia</taxon>
        <taxon>Burkholderia cepacia complex</taxon>
    </lineage>
</organism>
<sequence>MTQWEVVIGLETHAQLSTVSKIFSGAPTQFGAEPNTQACPVDLALPGVLPVLNRGAVERAIRFGLAIGSTIAPRSIFARKNYFYPDLPKGYQISQYEIPVVQGGQITIQVPANEKAGKPAYEKTVNLTRAHLEEDAGKSLHEDFAGMTGIDLNRAGTPLLEIVTEPEMRSAAEAVAYAKALHALVVWLGICDGNMQEGSFRCDANVSVRPVGQEKFGTRAEIKNLNSFRFLEEAINYEVRRQIELIEDGGEVVQETRLYDPDKRETRSMRSKEDAHDYRYFPDPDLMPLVIGQDWIERVQAGMPELPAAIQQRFVDQYGVSAYDAGVLTSSKAMAAYFEAVVAKAGAANAKIAANWLMGDVSSQLNRDGIEIDAIPVSAAQLALVLQRIADGTISNKIAKEIFATIWDEKATDEGAADRIIDAKGLKQISDTGALEAIIDEVLAANAKSVEEFRAGKEKAFNALIGQAMKATKGKANPQQVNELLKKKLG</sequence>
<comment type="function">
    <text evidence="1">Allows the formation of correctly charged Asn-tRNA(Asn) or Gln-tRNA(Gln) through the transamidation of misacylated Asp-tRNA(Asn) or Glu-tRNA(Gln) in organisms which lack either or both of asparaginyl-tRNA or glutaminyl-tRNA synthetases. The reaction takes place in the presence of glutamine and ATP through an activated phospho-Asp-tRNA(Asn) or phospho-Glu-tRNA(Gln).</text>
</comment>
<comment type="catalytic activity">
    <reaction evidence="1">
        <text>L-glutamyl-tRNA(Gln) + L-glutamine + ATP + H2O = L-glutaminyl-tRNA(Gln) + L-glutamate + ADP + phosphate + H(+)</text>
        <dbReference type="Rhea" id="RHEA:17521"/>
        <dbReference type="Rhea" id="RHEA-COMP:9681"/>
        <dbReference type="Rhea" id="RHEA-COMP:9684"/>
        <dbReference type="ChEBI" id="CHEBI:15377"/>
        <dbReference type="ChEBI" id="CHEBI:15378"/>
        <dbReference type="ChEBI" id="CHEBI:29985"/>
        <dbReference type="ChEBI" id="CHEBI:30616"/>
        <dbReference type="ChEBI" id="CHEBI:43474"/>
        <dbReference type="ChEBI" id="CHEBI:58359"/>
        <dbReference type="ChEBI" id="CHEBI:78520"/>
        <dbReference type="ChEBI" id="CHEBI:78521"/>
        <dbReference type="ChEBI" id="CHEBI:456216"/>
    </reaction>
</comment>
<comment type="catalytic activity">
    <reaction evidence="1">
        <text>L-aspartyl-tRNA(Asn) + L-glutamine + ATP + H2O = L-asparaginyl-tRNA(Asn) + L-glutamate + ADP + phosphate + 2 H(+)</text>
        <dbReference type="Rhea" id="RHEA:14513"/>
        <dbReference type="Rhea" id="RHEA-COMP:9674"/>
        <dbReference type="Rhea" id="RHEA-COMP:9677"/>
        <dbReference type="ChEBI" id="CHEBI:15377"/>
        <dbReference type="ChEBI" id="CHEBI:15378"/>
        <dbReference type="ChEBI" id="CHEBI:29985"/>
        <dbReference type="ChEBI" id="CHEBI:30616"/>
        <dbReference type="ChEBI" id="CHEBI:43474"/>
        <dbReference type="ChEBI" id="CHEBI:58359"/>
        <dbReference type="ChEBI" id="CHEBI:78515"/>
        <dbReference type="ChEBI" id="CHEBI:78516"/>
        <dbReference type="ChEBI" id="CHEBI:456216"/>
    </reaction>
</comment>
<comment type="subunit">
    <text evidence="1">Heterotrimer of A, B and C subunits.</text>
</comment>
<comment type="similarity">
    <text evidence="1">Belongs to the GatB/GatE family. GatB subfamily.</text>
</comment>
<proteinExistence type="inferred from homology"/>
<reference key="1">
    <citation type="submission" date="2007-03" db="EMBL/GenBank/DDBJ databases">
        <title>Complete sequence of chromosome 1 of Burkholderia vietnamiensis G4.</title>
        <authorList>
            <consortium name="US DOE Joint Genome Institute"/>
            <person name="Copeland A."/>
            <person name="Lucas S."/>
            <person name="Lapidus A."/>
            <person name="Barry K."/>
            <person name="Detter J.C."/>
            <person name="Glavina del Rio T."/>
            <person name="Hammon N."/>
            <person name="Israni S."/>
            <person name="Dalin E."/>
            <person name="Tice H."/>
            <person name="Pitluck S."/>
            <person name="Chain P."/>
            <person name="Malfatti S."/>
            <person name="Shin M."/>
            <person name="Vergez L."/>
            <person name="Schmutz J."/>
            <person name="Larimer F."/>
            <person name="Land M."/>
            <person name="Hauser L."/>
            <person name="Kyrpides N."/>
            <person name="Tiedje J."/>
            <person name="Richardson P."/>
        </authorList>
    </citation>
    <scope>NUCLEOTIDE SEQUENCE [LARGE SCALE GENOMIC DNA]</scope>
    <source>
        <strain>G4 / LMG 22486</strain>
    </source>
</reference>
<gene>
    <name evidence="1" type="primary">gatB</name>
    <name type="ordered locus">Bcep1808_3191</name>
</gene>
<dbReference type="EC" id="6.3.5.-" evidence="1"/>
<dbReference type="EMBL" id="CP000614">
    <property type="protein sequence ID" value="ABO56182.1"/>
    <property type="molecule type" value="Genomic_DNA"/>
</dbReference>
<dbReference type="SMR" id="A4JIS9"/>
<dbReference type="KEGG" id="bvi:Bcep1808_3191"/>
<dbReference type="eggNOG" id="COG0064">
    <property type="taxonomic scope" value="Bacteria"/>
</dbReference>
<dbReference type="HOGENOM" id="CLU_019240_0_0_4"/>
<dbReference type="Proteomes" id="UP000002287">
    <property type="component" value="Chromosome 1"/>
</dbReference>
<dbReference type="GO" id="GO:0050566">
    <property type="term" value="F:asparaginyl-tRNA synthase (glutamine-hydrolyzing) activity"/>
    <property type="evidence" value="ECO:0007669"/>
    <property type="project" value="RHEA"/>
</dbReference>
<dbReference type="GO" id="GO:0005524">
    <property type="term" value="F:ATP binding"/>
    <property type="evidence" value="ECO:0007669"/>
    <property type="project" value="UniProtKB-KW"/>
</dbReference>
<dbReference type="GO" id="GO:0050567">
    <property type="term" value="F:glutaminyl-tRNA synthase (glutamine-hydrolyzing) activity"/>
    <property type="evidence" value="ECO:0007669"/>
    <property type="project" value="UniProtKB-UniRule"/>
</dbReference>
<dbReference type="GO" id="GO:0070681">
    <property type="term" value="P:glutaminyl-tRNAGln biosynthesis via transamidation"/>
    <property type="evidence" value="ECO:0007669"/>
    <property type="project" value="TreeGrafter"/>
</dbReference>
<dbReference type="GO" id="GO:0006412">
    <property type="term" value="P:translation"/>
    <property type="evidence" value="ECO:0007669"/>
    <property type="project" value="UniProtKB-UniRule"/>
</dbReference>
<dbReference type="FunFam" id="1.10.10.410:FF:000001">
    <property type="entry name" value="Aspartyl/glutamyl-tRNA(Asn/Gln) amidotransferase subunit B"/>
    <property type="match status" value="1"/>
</dbReference>
<dbReference type="FunFam" id="1.10.150.380:FF:000001">
    <property type="entry name" value="Aspartyl/glutamyl-tRNA(Asn/Gln) amidotransferase subunit B"/>
    <property type="match status" value="1"/>
</dbReference>
<dbReference type="Gene3D" id="1.10.10.410">
    <property type="match status" value="1"/>
</dbReference>
<dbReference type="Gene3D" id="1.10.150.380">
    <property type="entry name" value="GatB domain, N-terminal subdomain"/>
    <property type="match status" value="1"/>
</dbReference>
<dbReference type="HAMAP" id="MF_00121">
    <property type="entry name" value="GatB"/>
    <property type="match status" value="1"/>
</dbReference>
<dbReference type="InterPro" id="IPR017959">
    <property type="entry name" value="Asn/Gln-tRNA_amidoTrfase_suB/E"/>
</dbReference>
<dbReference type="InterPro" id="IPR006075">
    <property type="entry name" value="Asn/Gln-tRNA_Trfase_suB/E_cat"/>
</dbReference>
<dbReference type="InterPro" id="IPR018027">
    <property type="entry name" value="Asn/Gln_amidotransferase"/>
</dbReference>
<dbReference type="InterPro" id="IPR003789">
    <property type="entry name" value="Asn/Gln_tRNA_amidoTrase-B-like"/>
</dbReference>
<dbReference type="InterPro" id="IPR004413">
    <property type="entry name" value="GatB"/>
</dbReference>
<dbReference type="InterPro" id="IPR042114">
    <property type="entry name" value="GatB_C_1"/>
</dbReference>
<dbReference type="InterPro" id="IPR023168">
    <property type="entry name" value="GatB_Yqey_C_2"/>
</dbReference>
<dbReference type="InterPro" id="IPR017958">
    <property type="entry name" value="Gln-tRNA_amidoTrfase_suB_CS"/>
</dbReference>
<dbReference type="InterPro" id="IPR014746">
    <property type="entry name" value="Gln_synth/guanido_kin_cat_dom"/>
</dbReference>
<dbReference type="NCBIfam" id="TIGR00133">
    <property type="entry name" value="gatB"/>
    <property type="match status" value="1"/>
</dbReference>
<dbReference type="NCBIfam" id="NF004012">
    <property type="entry name" value="PRK05477.1-2"/>
    <property type="match status" value="1"/>
</dbReference>
<dbReference type="NCBIfam" id="NF004014">
    <property type="entry name" value="PRK05477.1-4"/>
    <property type="match status" value="1"/>
</dbReference>
<dbReference type="NCBIfam" id="NF004015">
    <property type="entry name" value="PRK05477.1-5"/>
    <property type="match status" value="1"/>
</dbReference>
<dbReference type="PANTHER" id="PTHR11659">
    <property type="entry name" value="GLUTAMYL-TRNA GLN AMIDOTRANSFERASE SUBUNIT B MITOCHONDRIAL AND PROKARYOTIC PET112-RELATED"/>
    <property type="match status" value="1"/>
</dbReference>
<dbReference type="PANTHER" id="PTHR11659:SF0">
    <property type="entry name" value="GLUTAMYL-TRNA(GLN) AMIDOTRANSFERASE SUBUNIT B, MITOCHONDRIAL"/>
    <property type="match status" value="1"/>
</dbReference>
<dbReference type="Pfam" id="PF02934">
    <property type="entry name" value="GatB_N"/>
    <property type="match status" value="1"/>
</dbReference>
<dbReference type="Pfam" id="PF02637">
    <property type="entry name" value="GatB_Yqey"/>
    <property type="match status" value="1"/>
</dbReference>
<dbReference type="SMART" id="SM00845">
    <property type="entry name" value="GatB_Yqey"/>
    <property type="match status" value="1"/>
</dbReference>
<dbReference type="SUPFAM" id="SSF89095">
    <property type="entry name" value="GatB/YqeY motif"/>
    <property type="match status" value="1"/>
</dbReference>
<dbReference type="SUPFAM" id="SSF55931">
    <property type="entry name" value="Glutamine synthetase/guanido kinase"/>
    <property type="match status" value="1"/>
</dbReference>
<dbReference type="PROSITE" id="PS01234">
    <property type="entry name" value="GATB"/>
    <property type="match status" value="1"/>
</dbReference>
<accession>A4JIS9</accession>
<name>GATB_BURVG</name>
<keyword id="KW-0067">ATP-binding</keyword>
<keyword id="KW-0436">Ligase</keyword>
<keyword id="KW-0547">Nucleotide-binding</keyword>
<keyword id="KW-0648">Protein biosynthesis</keyword>
<protein>
    <recommendedName>
        <fullName evidence="1">Aspartyl/glutamyl-tRNA(Asn/Gln) amidotransferase subunit B</fullName>
        <shortName evidence="1">Asp/Glu-ADT subunit B</shortName>
        <ecNumber evidence="1">6.3.5.-</ecNumber>
    </recommendedName>
</protein>
<feature type="chain" id="PRO_1000015948" description="Aspartyl/glutamyl-tRNA(Asn/Gln) amidotransferase subunit B">
    <location>
        <begin position="1"/>
        <end position="490"/>
    </location>
</feature>
<evidence type="ECO:0000255" key="1">
    <source>
        <dbReference type="HAMAP-Rule" id="MF_00121"/>
    </source>
</evidence>